<proteinExistence type="evidence at protein level"/>
<feature type="chain" id="PRO_0000035949" description="Small ubiquitin-related modifier 2">
    <location>
        <begin position="1"/>
        <end position="93"/>
    </location>
</feature>
<feature type="propeptide" id="PRO_0000035950" evidence="6">
    <location>
        <begin position="94"/>
        <end position="95"/>
    </location>
</feature>
<feature type="domain" description="Ubiquitin-like" evidence="2">
    <location>
        <begin position="16"/>
        <end position="95"/>
    </location>
</feature>
<feature type="modified residue" description="N6-acetyllysine; alternate" evidence="25">
    <location>
        <position position="11"/>
    </location>
</feature>
<feature type="cross-link" description="Peptide (Met-Gly) (interchain with G-Cter in ubiquitin)" evidence="14">
    <location>
        <position position="1"/>
    </location>
</feature>
<feature type="cross-link" description="Glycyl lysine isopeptide (Lys-Gly) (interchain with G-Cter in SUMO2)" evidence="28 30">
    <location>
        <position position="5"/>
    </location>
</feature>
<feature type="cross-link" description="Glycyl lysine isopeptide (Lys-Gly) (interchain with G-Cter in SUMO2)" evidence="27 28 29 30">
    <location>
        <position position="7"/>
    </location>
</feature>
<feature type="cross-link" description="Glycyl lysine isopeptide (Lys-Gly) (interchain with G-Cter in SUMO); alternate">
    <location>
        <position position="11"/>
    </location>
</feature>
<feature type="cross-link" description="Glycyl lysine isopeptide (Lys-Gly) (interchain with G-Cter in SUMO1); alternate" evidence="26">
    <location>
        <position position="11"/>
    </location>
</feature>
<feature type="cross-link" description="Glycyl lysine isopeptide (Lys-Gly) (interchain with G-Cter in SUMO2); alternate" evidence="27 28 29 30">
    <location>
        <position position="11"/>
    </location>
</feature>
<feature type="cross-link" description="Glycyl lysine isopeptide (Lys-Gly) (interchain with G-Cter in ubiquitin); alternate" evidence="9">
    <location>
        <position position="11"/>
    </location>
</feature>
<feature type="cross-link" description="Glycyl lysine isopeptide (Lys-Gly) (interchain with G-Cter in SUMO2)" evidence="30">
    <location>
        <position position="21"/>
    </location>
</feature>
<feature type="cross-link" description="Glycyl lysine isopeptide (Gly-Lys) (interchain with K-? in acceptor proteins)">
    <location>
        <position position="93"/>
    </location>
</feature>
<feature type="splice variant" id="VSP_042351" description="In isoform 2." evidence="20">
    <location>
        <begin position="51"/>
        <end position="74"/>
    </location>
</feature>
<feature type="sequence variant" id="VAR_047508" description="In dbSNP:rs17850328." evidence="7">
    <original>D</original>
    <variation>N</variation>
    <location>
        <position position="16"/>
    </location>
</feature>
<feature type="mutagenesis site" description="Abolishes the formation of poly(SUMO) chains." evidence="3">
    <original>K</original>
    <variation>R</variation>
    <location>
        <position position="11"/>
    </location>
</feature>
<feature type="mutagenesis site" description="Significantly impairs sumoylation of MTA1." evidence="11">
    <original>K</original>
    <variation>E</variation>
    <location>
        <position position="33"/>
    </location>
</feature>
<feature type="mutagenesis site" description="Significantly impairs sumoylation of MTA1." evidence="11">
    <original>K</original>
    <variation>E</variation>
    <location>
        <position position="35"/>
    </location>
</feature>
<feature type="mutagenesis site" description="Significantly impairs sumoylation of MTA1." evidence="11">
    <original>K</original>
    <variation>E</variation>
    <location>
        <position position="42"/>
    </location>
</feature>
<feature type="strand" evidence="34">
    <location>
        <begin position="3"/>
        <end position="5"/>
    </location>
</feature>
<feature type="strand" evidence="35">
    <location>
        <begin position="11"/>
        <end position="13"/>
    </location>
</feature>
<feature type="turn" evidence="35">
    <location>
        <begin position="14"/>
        <end position="16"/>
    </location>
</feature>
<feature type="strand" evidence="31">
    <location>
        <begin position="18"/>
        <end position="23"/>
    </location>
</feature>
<feature type="turn" evidence="33">
    <location>
        <begin position="25"/>
        <end position="27"/>
    </location>
</feature>
<feature type="strand" evidence="31">
    <location>
        <begin position="29"/>
        <end position="34"/>
    </location>
</feature>
<feature type="strand" evidence="36">
    <location>
        <begin position="36"/>
        <end position="38"/>
    </location>
</feature>
<feature type="helix" evidence="31">
    <location>
        <begin position="41"/>
        <end position="51"/>
    </location>
</feature>
<feature type="turn" evidence="31">
    <location>
        <begin position="55"/>
        <end position="57"/>
    </location>
</feature>
<feature type="strand" evidence="31">
    <location>
        <begin position="59"/>
        <end position="62"/>
    </location>
</feature>
<feature type="strand" evidence="35">
    <location>
        <begin position="65"/>
        <end position="67"/>
    </location>
</feature>
<feature type="turn" evidence="31">
    <location>
        <begin position="73"/>
        <end position="77"/>
    </location>
</feature>
<feature type="strand" evidence="31">
    <location>
        <begin position="82"/>
        <end position="87"/>
    </location>
</feature>
<feature type="strand" evidence="32">
    <location>
        <begin position="90"/>
        <end position="93"/>
    </location>
</feature>
<protein>
    <recommendedName>
        <fullName evidence="23">Small ubiquitin-related modifier 2</fullName>
        <shortName evidence="23">SUMO-2</shortName>
    </recommendedName>
    <alternativeName>
        <fullName evidence="21">HSMT3</fullName>
    </alternativeName>
    <alternativeName>
        <fullName evidence="24">SMT3 homolog 2</fullName>
    </alternativeName>
    <alternativeName>
        <fullName evidence="19">SUMO-3</fullName>
    </alternativeName>
    <alternativeName>
        <fullName evidence="22">Sentrin-2</fullName>
    </alternativeName>
    <alternativeName>
        <fullName evidence="23">Ubiquitin-like protein SMT3B</fullName>
        <shortName evidence="19">Smt3B</shortName>
    </alternativeName>
</protein>
<reference key="1">
    <citation type="journal article" date="1996" name="Biochem. Biophys. Res. Commun.">
        <title>Cloning and expression of human homolog HSMT3 to yeast SMT3 suppressor of MIF2 mutations in a centromere protein gene.</title>
        <authorList>
            <person name="Mannen H."/>
            <person name="Tseng H.M."/>
            <person name="Cho C.L."/>
            <person name="Li S.S.-L."/>
        </authorList>
    </citation>
    <scope>NUCLEOTIDE SEQUENCE [MRNA] (ISOFORM 1)</scope>
    <source>
        <tissue>Brain</tissue>
    </source>
</reference>
<reference key="2">
    <citation type="journal article" date="1997" name="Genomics">
        <title>SMT3A, a human homologue of the S. cerevisiae SMT3 gene, maps to chromosome 21qter and defines a novel gene family.</title>
        <authorList>
            <person name="Lapenta V."/>
            <person name="Chiurazzi P."/>
            <person name="van der Spek P.J."/>
            <person name="Pizzuti A."/>
            <person name="Hanaoka F."/>
            <person name="Brahe C."/>
        </authorList>
    </citation>
    <scope>NUCLEOTIDE SEQUENCE [MRNA] (ISOFORM 1)</scope>
    <source>
        <tissue>Brain</tissue>
    </source>
</reference>
<reference key="3">
    <citation type="journal article" date="2004" name="Nat. Genet.">
        <title>Complete sequencing and characterization of 21,243 full-length human cDNAs.</title>
        <authorList>
            <person name="Ota T."/>
            <person name="Suzuki Y."/>
            <person name="Nishikawa T."/>
            <person name="Otsuki T."/>
            <person name="Sugiyama T."/>
            <person name="Irie R."/>
            <person name="Wakamatsu A."/>
            <person name="Hayashi K."/>
            <person name="Sato H."/>
            <person name="Nagai K."/>
            <person name="Kimura K."/>
            <person name="Makita H."/>
            <person name="Sekine M."/>
            <person name="Obayashi M."/>
            <person name="Nishi T."/>
            <person name="Shibahara T."/>
            <person name="Tanaka T."/>
            <person name="Ishii S."/>
            <person name="Yamamoto J."/>
            <person name="Saito K."/>
            <person name="Kawai Y."/>
            <person name="Isono Y."/>
            <person name="Nakamura Y."/>
            <person name="Nagahari K."/>
            <person name="Murakami K."/>
            <person name="Yasuda T."/>
            <person name="Iwayanagi T."/>
            <person name="Wagatsuma M."/>
            <person name="Shiratori A."/>
            <person name="Sudo H."/>
            <person name="Hosoiri T."/>
            <person name="Kaku Y."/>
            <person name="Kodaira H."/>
            <person name="Kondo H."/>
            <person name="Sugawara M."/>
            <person name="Takahashi M."/>
            <person name="Kanda K."/>
            <person name="Yokoi T."/>
            <person name="Furuya T."/>
            <person name="Kikkawa E."/>
            <person name="Omura Y."/>
            <person name="Abe K."/>
            <person name="Kamihara K."/>
            <person name="Katsuta N."/>
            <person name="Sato K."/>
            <person name="Tanikawa M."/>
            <person name="Yamazaki M."/>
            <person name="Ninomiya K."/>
            <person name="Ishibashi T."/>
            <person name="Yamashita H."/>
            <person name="Murakawa K."/>
            <person name="Fujimori K."/>
            <person name="Tanai H."/>
            <person name="Kimata M."/>
            <person name="Watanabe M."/>
            <person name="Hiraoka S."/>
            <person name="Chiba Y."/>
            <person name="Ishida S."/>
            <person name="Ono Y."/>
            <person name="Takiguchi S."/>
            <person name="Watanabe S."/>
            <person name="Yosida M."/>
            <person name="Hotuta T."/>
            <person name="Kusano J."/>
            <person name="Kanehori K."/>
            <person name="Takahashi-Fujii A."/>
            <person name="Hara H."/>
            <person name="Tanase T.-O."/>
            <person name="Nomura Y."/>
            <person name="Togiya S."/>
            <person name="Komai F."/>
            <person name="Hara R."/>
            <person name="Takeuchi K."/>
            <person name="Arita M."/>
            <person name="Imose N."/>
            <person name="Musashino K."/>
            <person name="Yuuki H."/>
            <person name="Oshima A."/>
            <person name="Sasaki N."/>
            <person name="Aotsuka S."/>
            <person name="Yoshikawa Y."/>
            <person name="Matsunawa H."/>
            <person name="Ichihara T."/>
            <person name="Shiohata N."/>
            <person name="Sano S."/>
            <person name="Moriya S."/>
            <person name="Momiyama H."/>
            <person name="Satoh N."/>
            <person name="Takami S."/>
            <person name="Terashima Y."/>
            <person name="Suzuki O."/>
            <person name="Nakagawa S."/>
            <person name="Senoh A."/>
            <person name="Mizoguchi H."/>
            <person name="Goto Y."/>
            <person name="Shimizu F."/>
            <person name="Wakebe H."/>
            <person name="Hishigaki H."/>
            <person name="Watanabe T."/>
            <person name="Sugiyama A."/>
            <person name="Takemoto M."/>
            <person name="Kawakami B."/>
            <person name="Yamazaki M."/>
            <person name="Watanabe K."/>
            <person name="Kumagai A."/>
            <person name="Itakura S."/>
            <person name="Fukuzumi Y."/>
            <person name="Fujimori Y."/>
            <person name="Komiyama M."/>
            <person name="Tashiro H."/>
            <person name="Tanigami A."/>
            <person name="Fujiwara T."/>
            <person name="Ono T."/>
            <person name="Yamada K."/>
            <person name="Fujii Y."/>
            <person name="Ozaki K."/>
            <person name="Hirao M."/>
            <person name="Ohmori Y."/>
            <person name="Kawabata A."/>
            <person name="Hikiji T."/>
            <person name="Kobatake N."/>
            <person name="Inagaki H."/>
            <person name="Ikema Y."/>
            <person name="Okamoto S."/>
            <person name="Okitani R."/>
            <person name="Kawakami T."/>
            <person name="Noguchi S."/>
            <person name="Itoh T."/>
            <person name="Shigeta K."/>
            <person name="Senba T."/>
            <person name="Matsumura K."/>
            <person name="Nakajima Y."/>
            <person name="Mizuno T."/>
            <person name="Morinaga M."/>
            <person name="Sasaki M."/>
            <person name="Togashi T."/>
            <person name="Oyama M."/>
            <person name="Hata H."/>
            <person name="Watanabe M."/>
            <person name="Komatsu T."/>
            <person name="Mizushima-Sugano J."/>
            <person name="Satoh T."/>
            <person name="Shirai Y."/>
            <person name="Takahashi Y."/>
            <person name="Nakagawa K."/>
            <person name="Okumura K."/>
            <person name="Nagase T."/>
            <person name="Nomura N."/>
            <person name="Kikuchi H."/>
            <person name="Masuho Y."/>
            <person name="Yamashita R."/>
            <person name="Nakai K."/>
            <person name="Yada T."/>
            <person name="Nakamura Y."/>
            <person name="Ohara O."/>
            <person name="Isogai T."/>
            <person name="Sugano S."/>
        </authorList>
    </citation>
    <scope>NUCLEOTIDE SEQUENCE [LARGE SCALE MRNA] (ISOFORM 1)</scope>
    <source>
        <tissue>Cerebellum</tissue>
    </source>
</reference>
<reference key="4">
    <citation type="journal article" date="2006" name="Nature">
        <title>DNA sequence of human chromosome 17 and analysis of rearrangement in the human lineage.</title>
        <authorList>
            <person name="Zody M.C."/>
            <person name="Garber M."/>
            <person name="Adams D.J."/>
            <person name="Sharpe T."/>
            <person name="Harrow J."/>
            <person name="Lupski J.R."/>
            <person name="Nicholson C."/>
            <person name="Searle S.M."/>
            <person name="Wilming L."/>
            <person name="Young S.K."/>
            <person name="Abouelleil A."/>
            <person name="Allen N.R."/>
            <person name="Bi W."/>
            <person name="Bloom T."/>
            <person name="Borowsky M.L."/>
            <person name="Bugalter B.E."/>
            <person name="Butler J."/>
            <person name="Chang J.L."/>
            <person name="Chen C.-K."/>
            <person name="Cook A."/>
            <person name="Corum B."/>
            <person name="Cuomo C.A."/>
            <person name="de Jong P.J."/>
            <person name="DeCaprio D."/>
            <person name="Dewar K."/>
            <person name="FitzGerald M."/>
            <person name="Gilbert J."/>
            <person name="Gibson R."/>
            <person name="Gnerre S."/>
            <person name="Goldstein S."/>
            <person name="Grafham D.V."/>
            <person name="Grocock R."/>
            <person name="Hafez N."/>
            <person name="Hagopian D.S."/>
            <person name="Hart E."/>
            <person name="Norman C.H."/>
            <person name="Humphray S."/>
            <person name="Jaffe D.B."/>
            <person name="Jones M."/>
            <person name="Kamal M."/>
            <person name="Khodiyar V.K."/>
            <person name="LaButti K."/>
            <person name="Laird G."/>
            <person name="Lehoczky J."/>
            <person name="Liu X."/>
            <person name="Lokyitsang T."/>
            <person name="Loveland J."/>
            <person name="Lui A."/>
            <person name="Macdonald P."/>
            <person name="Major J.E."/>
            <person name="Matthews L."/>
            <person name="Mauceli E."/>
            <person name="McCarroll S.A."/>
            <person name="Mihalev A.H."/>
            <person name="Mudge J."/>
            <person name="Nguyen C."/>
            <person name="Nicol R."/>
            <person name="O'Leary S.B."/>
            <person name="Osoegawa K."/>
            <person name="Schwartz D.C."/>
            <person name="Shaw-Smith C."/>
            <person name="Stankiewicz P."/>
            <person name="Steward C."/>
            <person name="Swarbreck D."/>
            <person name="Venkataraman V."/>
            <person name="Whittaker C.A."/>
            <person name="Yang X."/>
            <person name="Zimmer A.R."/>
            <person name="Bradley A."/>
            <person name="Hubbard T."/>
            <person name="Birren B.W."/>
            <person name="Rogers J."/>
            <person name="Lander E.S."/>
            <person name="Nusbaum C."/>
        </authorList>
    </citation>
    <scope>NUCLEOTIDE SEQUENCE [LARGE SCALE GENOMIC DNA]</scope>
</reference>
<reference key="5">
    <citation type="submission" date="2005-07" db="EMBL/GenBank/DDBJ databases">
        <authorList>
            <person name="Mural R.J."/>
            <person name="Istrail S."/>
            <person name="Sutton G.G."/>
            <person name="Florea L."/>
            <person name="Halpern A.L."/>
            <person name="Mobarry C.M."/>
            <person name="Lippert R."/>
            <person name="Walenz B."/>
            <person name="Shatkay H."/>
            <person name="Dew I."/>
            <person name="Miller J.R."/>
            <person name="Flanigan M.J."/>
            <person name="Edwards N.J."/>
            <person name="Bolanos R."/>
            <person name="Fasulo D."/>
            <person name="Halldorsson B.V."/>
            <person name="Hannenhalli S."/>
            <person name="Turner R."/>
            <person name="Yooseph S."/>
            <person name="Lu F."/>
            <person name="Nusskern D.R."/>
            <person name="Shue B.C."/>
            <person name="Zheng X.H."/>
            <person name="Zhong F."/>
            <person name="Delcher A.L."/>
            <person name="Huson D.H."/>
            <person name="Kravitz S.A."/>
            <person name="Mouchard L."/>
            <person name="Reinert K."/>
            <person name="Remington K.A."/>
            <person name="Clark A.G."/>
            <person name="Waterman M.S."/>
            <person name="Eichler E.E."/>
            <person name="Adams M.D."/>
            <person name="Hunkapiller M.W."/>
            <person name="Myers E.W."/>
            <person name="Venter J.C."/>
        </authorList>
    </citation>
    <scope>NUCLEOTIDE SEQUENCE [LARGE SCALE GENOMIC DNA]</scope>
</reference>
<reference key="6">
    <citation type="journal article" date="2004" name="Genome Res.">
        <title>The status, quality, and expansion of the NIH full-length cDNA project: the Mammalian Gene Collection (MGC).</title>
        <authorList>
            <consortium name="The MGC Project Team"/>
        </authorList>
    </citation>
    <scope>NUCLEOTIDE SEQUENCE [LARGE SCALE MRNA] (ISOFORMS 1 AND 2)</scope>
    <scope>VARIANT ASN-16</scope>
    <source>
        <tissue>Blood vessel</tissue>
        <tissue>Bone</tissue>
        <tissue>Bone marrow</tissue>
        <tissue>Brain</tissue>
        <tissue>Lung</tissue>
        <tissue>Skin</tissue>
        <tissue>Testis</tissue>
    </source>
</reference>
<reference key="7">
    <citation type="journal article" date="1998" name="J. Biol. Chem.">
        <title>Characterization of a second member of the sentrin family of ubiquitin-like proteins.</title>
        <authorList>
            <person name="Kamitani T."/>
            <person name="Kito K."/>
            <person name="Nguyen H.P."/>
            <person name="Fukuda-Kamitani T."/>
            <person name="Yeh E.T.H."/>
        </authorList>
    </citation>
    <scope>FUNCTION</scope>
    <scope>PROTEOLYTIC CLEAVAGE</scope>
    <scope>SUBCELLULAR LOCATION</scope>
    <scope>TISSUE SPECIFICITY</scope>
</reference>
<reference key="8">
    <citation type="journal article" date="2000" name="J. Biol. Chem.">
        <title>Functional heterogeneity of small ubiquitin-related protein modifiers SUMO-1 versus SUMO-2/3.</title>
        <authorList>
            <person name="Saitoh H."/>
            <person name="Hinchey J."/>
        </authorList>
    </citation>
    <scope>IDENTIFICATION</scope>
    <scope>NOMENCLATURE</scope>
</reference>
<reference key="9">
    <citation type="journal article" date="2001" name="J. Biol. Chem.">
        <title>Polymeric chains of SUMO-2 and SUMO-3 are conjugated to protein substrates by SAE1/SAE2 and Ubc9.</title>
        <authorList>
            <person name="Tatham M.H."/>
            <person name="Jaffray E."/>
            <person name="Vaughan O.A."/>
            <person name="Desterro J.M.P."/>
            <person name="Botting C.H."/>
            <person name="Naismith J.H."/>
            <person name="Hay R.T."/>
        </authorList>
    </citation>
    <scope>SUMOYLATION AT LYS-11</scope>
    <scope>MUTAGENESIS OF LYS-11</scope>
</reference>
<reference key="10">
    <citation type="journal article" date="2002" name="Gene">
        <title>Molecular features of human ubiquitin-like SUMO genes and their encoded proteins.</title>
        <authorList>
            <person name="Su H.-L."/>
            <person name="Li S.S.-L."/>
        </authorList>
    </citation>
    <scope>SUBCELLULAR LOCATION</scope>
</reference>
<reference key="11">
    <citation type="journal article" date="2003" name="Biochemistry">
        <title>Role of an N-terminal site of Ubc9 in SUMO-1, -2, and -3 binding and conjugation.</title>
        <authorList>
            <person name="Tatham M.H."/>
            <person name="Kim S."/>
            <person name="Yu B."/>
            <person name="Jaffray E."/>
            <person name="Song J."/>
            <person name="Zheng J."/>
            <person name="Rodriguez M.S."/>
            <person name="Hay R.T."/>
            <person name="Chen Y."/>
        </authorList>
    </citation>
    <scope>INTERACTION WITH UBE2I</scope>
</reference>
<reference key="12">
    <citation type="journal article" date="2004" name="Structure">
        <title>A basis for SUMO protease specificity provided by analysis of human Senp2 and a Senp2-SUMO complex.</title>
        <authorList>
            <person name="Reverter D."/>
            <person name="Lima C.D."/>
        </authorList>
    </citation>
    <scope>CLEAVAGE</scope>
</reference>
<reference key="13">
    <citation type="journal article" date="2005" name="Biochem. J.">
        <title>Mapping residues of SUMO precursors essential in differential maturation by SUMO-specific protease, SENP1.</title>
        <authorList>
            <person name="Xu Z."/>
            <person name="Au S.W.N."/>
        </authorList>
    </citation>
    <scope>CLEAVAGE</scope>
</reference>
<reference key="14">
    <citation type="journal article" date="2006" name="Proc. Natl. Acad. Sci. U.S.A.">
        <title>NXP-2 association with SUMO-2 depends on lysines required for transcriptional repression.</title>
        <authorList>
            <person name="Rosendorff A."/>
            <person name="Sakakibara S."/>
            <person name="Lu S."/>
            <person name="Kieff E."/>
            <person name="Xuan Y."/>
            <person name="DiBacco A."/>
            <person name="Shi Y."/>
            <person name="Shi Y."/>
            <person name="Gill G."/>
        </authorList>
    </citation>
    <scope>INTERACTION WITH PELP1</scope>
</reference>
<reference key="15">
    <citation type="journal article" date="2008" name="Mol. Cell">
        <title>Mechanism and consequences for paralog-specific sumoylation of ubiquitin-specific protease 25.</title>
        <authorList>
            <person name="Meulmeester E."/>
            <person name="Kunze M."/>
            <person name="Hsiao H.H."/>
            <person name="Urlaub H."/>
            <person name="Melchior F."/>
        </authorList>
    </citation>
    <scope>FUNCTION IN SUMOYLATION OF USP25</scope>
    <scope>INTERACTION WITH USP25</scope>
</reference>
<reference key="16">
    <citation type="journal article" date="2008" name="Nat. Cell Biol.">
        <title>RNF4 is a poly-SUMO-specific E3 ubiquitin ligase required for arsenic-induced PML degradation.</title>
        <authorList>
            <person name="Tatham M.H."/>
            <person name="Geoffroy M.C."/>
            <person name="Shen L."/>
            <person name="Plechanovova A."/>
            <person name="Hattersley N."/>
            <person name="Jaffray E.G."/>
            <person name="Palvimo J.J."/>
            <person name="Hay R.T."/>
        </authorList>
    </citation>
    <scope>FUNCTION</scope>
    <scope>POLYUBIQUITINATION AT LYS-11 BY RNF4</scope>
</reference>
<reference key="17">
    <citation type="journal article" date="2009" name="Science">
        <title>Lysine acetylation targets protein complexes and co-regulates major cellular functions.</title>
        <authorList>
            <person name="Choudhary C."/>
            <person name="Kumar C."/>
            <person name="Gnad F."/>
            <person name="Nielsen M.L."/>
            <person name="Rehman M."/>
            <person name="Walther T.C."/>
            <person name="Olsen J.V."/>
            <person name="Mann M."/>
        </authorList>
    </citation>
    <scope>ACETYLATION [LARGE SCALE ANALYSIS] AT LYS-11</scope>
    <scope>IDENTIFICATION BY MASS SPECTROMETRY [LARGE SCALE ANALYSIS]</scope>
</reference>
<reference key="18">
    <citation type="journal article" date="2010" name="J. Biol. Chem.">
        <title>In vivo identification of sumoylation sites by a signature tag and cysteine-targeted affinity purification.</title>
        <authorList>
            <person name="Blomster H.A."/>
            <person name="Imanishi S.Y."/>
            <person name="Siimes J."/>
            <person name="Kastu J."/>
            <person name="Morrice N.A."/>
            <person name="Eriksson J.E."/>
            <person name="Sistonen L."/>
        </authorList>
    </citation>
    <scope>SUMOYLATION AT LYS-11</scope>
    <source>
        <tissue>Cervix carcinoma</tissue>
    </source>
</reference>
<reference key="19">
    <citation type="journal article" date="2011" name="BMC Syst. Biol.">
        <title>Initial characterization of the human central proteome.</title>
        <authorList>
            <person name="Burkard T.R."/>
            <person name="Planyavsky M."/>
            <person name="Kaupe I."/>
            <person name="Breitwieser F.P."/>
            <person name="Buerckstuemmer T."/>
            <person name="Bennett K.L."/>
            <person name="Superti-Furga G."/>
            <person name="Colinge J."/>
        </authorList>
    </citation>
    <scope>IDENTIFICATION BY MASS SPECTROMETRY [LARGE SCALE ANALYSIS]</scope>
</reference>
<reference key="20">
    <citation type="journal article" date="2011" name="J. Biol. Chem.">
        <title>SUMOylation and SUMO-interacting motif (SIM) of metastasis tumor antigen 1 (MTA1) synergistically regulate its transcriptional repressor function.</title>
        <authorList>
            <person name="Cong L."/>
            <person name="Pakala S.B."/>
            <person name="Ohshiro K."/>
            <person name="Li D.Q."/>
            <person name="Kumar R."/>
        </authorList>
    </citation>
    <scope>FUNCTION</scope>
    <scope>INTERACTION WITH MTA1</scope>
    <scope>SUBCELLULAR LOCATION</scope>
    <scope>MUTAGENESIS OF LYS-33; LYS-35 AND LYS-42</scope>
</reference>
<reference key="21">
    <citation type="journal article" date="2012" name="Cancer Res.">
        <title>The SUMO E3-ligase PIAS1 regulates the tumor suppressor PML and its oncogenic counterpart PML-RARA.</title>
        <authorList>
            <person name="Rabellino A."/>
            <person name="Carter B."/>
            <person name="Konstantinidou G."/>
            <person name="Wu S.Y."/>
            <person name="Rimessi A."/>
            <person name="Byers L.A."/>
            <person name="Heymach J.V."/>
            <person name="Girard L."/>
            <person name="Chiang C.M."/>
            <person name="Teruya-Feldstein J."/>
            <person name="Scaglioni P.P."/>
        </authorList>
    </citation>
    <scope>SUBCELLULAR LOCATION</scope>
</reference>
<reference key="22">
    <citation type="journal article" date="2012" name="J. Biol. Chem.">
        <title>PolySUMO-binding proteins identified through a string search.</title>
        <authorList>
            <person name="Sun H."/>
            <person name="Hunter T."/>
        </authorList>
    </citation>
    <scope>IDENTIFICATION OF REPEAT SUMO-INTERACTING MOTIF</scope>
    <scope>INTERACTION WITH SIMC1; CASP8AP2; RNF111 AND SOBP</scope>
</reference>
<reference key="23">
    <citation type="journal article" date="2012" name="J. Virol.">
        <title>SUMO binding by the Epstein-Barr virus protein kinase BGLF4 is crucial for BGLF4 function.</title>
        <authorList>
            <person name="Li R."/>
            <person name="Wang L."/>
            <person name="Liao G."/>
            <person name="Guzzo C.M."/>
            <person name="Matunis M.J."/>
            <person name="Zhu H."/>
            <person name="Hayward S.D."/>
        </authorList>
    </citation>
    <scope>INTERACTION WITH EPSTEIN-BARR VIRUS BGLF4</scope>
</reference>
<reference key="24">
    <citation type="journal article" date="2013" name="Biochem. J.">
        <title>Ube2W conjugates ubiquitin to alpha-amino groups of protein N-termini.</title>
        <authorList>
            <person name="Tatham M.H."/>
            <person name="Plechanovova A."/>
            <person name="Jaffray E.G."/>
            <person name="Salmen H."/>
            <person name="Hay R.T."/>
        </authorList>
    </citation>
    <scope>UBIQUITINATION AT MET-1</scope>
</reference>
<reference key="25">
    <citation type="journal article" date="2013" name="Genes Dev.">
        <title>A SUMO-dependent interaction between Senataxin and the exosome, disrupted in the neurodegenerative disease AOA2, targets the exosome to sites of transcription-induced DNA damage.</title>
        <authorList>
            <person name="Richard P."/>
            <person name="Feng S."/>
            <person name="Manley J.L."/>
        </authorList>
    </citation>
    <scope>FUNCTION IN SUMOYLATION OF SETX</scope>
</reference>
<reference key="26">
    <citation type="journal article" date="2014" name="Nat. Struct. Mol. Biol.">
        <title>Uncovering global SUMOylation signaling networks in a site-specific manner.</title>
        <authorList>
            <person name="Hendriks I.A."/>
            <person name="D'Souza R.C."/>
            <person name="Yang B."/>
            <person name="Verlaan-de Vries M."/>
            <person name="Mann M."/>
            <person name="Vertegaal A.C."/>
        </authorList>
    </citation>
    <scope>SUMOYLATION [LARGE SCALE ANALYSIS] AT LYS-7 AND LYS-11</scope>
    <scope>IDENTIFICATION BY MASS SPECTROMETRY [LARGE SCALE ANALYSIS]</scope>
</reference>
<reference key="27">
    <citation type="journal article" date="2014" name="Proc. Natl. Acad. Sci. U.S.A.">
        <title>Mapping of SUMO sites and analysis of SUMOylation changes induced by external stimuli.</title>
        <authorList>
            <person name="Impens F."/>
            <person name="Radoshevich L."/>
            <person name="Cossart P."/>
            <person name="Ribet D."/>
        </authorList>
    </citation>
    <scope>SUMOYLATION [LARGE SCALE ANALYSIS] AT LYS-11</scope>
    <scope>IDENTIFICATION BY MASS SPECTROMETRY [LARGE SCALE ANALYSIS]</scope>
</reference>
<reference key="28">
    <citation type="journal article" date="2015" name="Cell Rep.">
        <title>SUMO-2 orchestrates chromatin modifiers in response to DNA damage.</title>
        <authorList>
            <person name="Hendriks I.A."/>
            <person name="Treffers L.W."/>
            <person name="Verlaan-de Vries M."/>
            <person name="Olsen J.V."/>
            <person name="Vertegaal A.C."/>
        </authorList>
    </citation>
    <scope>SUMOYLATION [LARGE SCALE ANALYSIS] AT LYS-7 AND LYS-11</scope>
    <scope>IDENTIFICATION BY MASS SPECTROMETRY [LARGE SCALE ANALYSIS]</scope>
</reference>
<reference key="29">
    <citation type="journal article" date="2015" name="Mol. Cell. Proteomics">
        <title>System-wide analysis of SUMOylation dynamics in response to replication stress reveals novel small ubiquitin-like modified target proteins and acceptor lysines relevant for genome stability.</title>
        <authorList>
            <person name="Xiao Z."/>
            <person name="Chang J.G."/>
            <person name="Hendriks I.A."/>
            <person name="Sigurdsson J.O."/>
            <person name="Olsen J.V."/>
            <person name="Vertegaal A.C."/>
        </authorList>
    </citation>
    <scope>SUMOYLATION [LARGE SCALE ANALYSIS] AT LYS-5; LYS-7 AND LYS-11</scope>
    <scope>IDENTIFICATION BY MASS SPECTROMETRY [LARGE SCALE ANALYSIS]</scope>
</reference>
<reference key="30">
    <citation type="journal article" date="2019" name="EMBO J.">
        <title>SUMOylation promotes protective responses to DNA-protein cross-links.</title>
        <authorList>
            <person name="Borgermann N."/>
            <person name="Ackermann L."/>
            <person name="Schwertman P."/>
            <person name="Hendriks I.A."/>
            <person name="Thijssen K."/>
            <person name="Liu J.C."/>
            <person name="Lans H."/>
            <person name="Nielsen M.L."/>
            <person name="Mailand N."/>
        </authorList>
    </citation>
    <scope>INTERACTION WITH GCNA</scope>
</reference>
<reference key="31">
    <citation type="journal article" date="2017" name="Nat. Struct. Mol. Biol.">
        <title>Site-specific mapping of the human SUMO proteome reveals co-modification with phosphorylation.</title>
        <authorList>
            <person name="Hendriks I.A."/>
            <person name="Lyon D."/>
            <person name="Young C."/>
            <person name="Jensen L.J."/>
            <person name="Vertegaal A.C."/>
            <person name="Nielsen M.L."/>
        </authorList>
    </citation>
    <scope>SUMOYLATION [LARGE SCALE ANALYSIS] AT LYS-5; LYS-7; LYS-11 AND LYS-21</scope>
    <scope>IDENTIFICATION BY MASS SPECTROMETRY [LARGE SCALE ANALYSIS]</scope>
</reference>
<reference key="32">
    <citation type="journal article" date="2004" name="Eur. J. Biochem.">
        <title>Crystal structures of the human SUMO-2 protein at 1.6 A and 1.2 A resolution: implication on the functional differences of SUMO proteins.</title>
        <authorList>
            <person name="Huang W.-C."/>
            <person name="Ko T.-P."/>
            <person name="Li S.S.-L."/>
            <person name="Wang A.H.-J."/>
        </authorList>
    </citation>
    <scope>X-RAY CRYSTALLOGRAPHY (1.2 ANGSTROMS) OF 9-93</scope>
    <scope>SUBUNIT</scope>
</reference>
<reference key="33">
    <citation type="submission" date="2005-08" db="PDB data bank">
        <title>Solution structure of human SUMO-2 (SMT3B), a ubiquitin-like protein.</title>
        <authorList>
            <consortium name="RIKEN structural genomics initiative (RSGI)"/>
        </authorList>
    </citation>
    <scope>STRUCTURE BY NMR OF 1-93</scope>
</reference>
<reference key="34">
    <citation type="journal article" date="2006" name="J. Mol. Biol.">
        <title>Crystal structure of SUMO-3-modified thymine-DNA glycosylase.</title>
        <authorList>
            <person name="Baba D."/>
            <person name="Maita N."/>
            <person name="Jee J.-G."/>
            <person name="Uchimura Y."/>
            <person name="Saitoh H."/>
            <person name="Sugasawa K."/>
            <person name="Hanaoka F."/>
            <person name="Tochio H."/>
            <person name="Hiroaki H."/>
            <person name="Shirakawa M."/>
        </authorList>
    </citation>
    <scope>X-RAY CRYSTALLOGRAPHY (2.1 ANGSTROMS) OF 1-93 CONJUGATED TO TDG</scope>
</reference>
<reference key="35">
    <citation type="submission" date="2006-10" db="PDB data bank">
        <title>Solution structure of human small ubiquitin-like modifier protein isoform 2 (SUMO-2).</title>
        <authorList>
            <person name="Chang C.K."/>
            <person name="Wang Y.H."/>
            <person name="Chung T.L."/>
            <person name="Chang C.F."/>
            <person name="Li S.S.L."/>
            <person name="Huang T.H."/>
        </authorList>
    </citation>
    <scope>STRUCTURE BY NMR OF 1-95</scope>
</reference>
<reference key="36">
    <citation type="journal article" date="2015" name="Nat. Struct. Mol. Biol.">
        <title>Structural basis for catalytic activation by the human ZNF451 SUMO E3 ligase.</title>
        <authorList>
            <person name="Cappadocia L."/>
            <person name="Pichler A."/>
            <person name="Lima C.D."/>
        </authorList>
    </citation>
    <scope>X-RAY CRYSTALLOGRAPHY (2.40 ANGSTROMS) IN COMPLEX WITH ZNF451 AND UBC9</scope>
    <scope>FUNCTION</scope>
    <scope>PATHWAY</scope>
    <scope>INTERACTION WITH ZNF451 AND UBC9</scope>
</reference>
<evidence type="ECO:0000250" key="1">
    <source>
        <dbReference type="UniProtKB" id="P61957"/>
    </source>
</evidence>
<evidence type="ECO:0000255" key="2">
    <source>
        <dbReference type="PROSITE-ProRule" id="PRU00214"/>
    </source>
</evidence>
<evidence type="ECO:0000269" key="3">
    <source>
    </source>
</evidence>
<evidence type="ECO:0000269" key="4">
    <source>
    </source>
</evidence>
<evidence type="ECO:0000269" key="5">
    <source>
    </source>
</evidence>
<evidence type="ECO:0000269" key="6">
    <source>
    </source>
</evidence>
<evidence type="ECO:0000269" key="7">
    <source>
    </source>
</evidence>
<evidence type="ECO:0000269" key="8">
    <source>
    </source>
</evidence>
<evidence type="ECO:0000269" key="9">
    <source>
    </source>
</evidence>
<evidence type="ECO:0000269" key="10">
    <source>
    </source>
</evidence>
<evidence type="ECO:0000269" key="11">
    <source>
    </source>
</evidence>
<evidence type="ECO:0000269" key="12">
    <source>
    </source>
</evidence>
<evidence type="ECO:0000269" key="13">
    <source>
    </source>
</evidence>
<evidence type="ECO:0000269" key="14">
    <source>
    </source>
</evidence>
<evidence type="ECO:0000269" key="15">
    <source>
    </source>
</evidence>
<evidence type="ECO:0000269" key="16">
    <source>
    </source>
</evidence>
<evidence type="ECO:0000269" key="17">
    <source>
    </source>
</evidence>
<evidence type="ECO:0000269" key="18">
    <source>
    </source>
</evidence>
<evidence type="ECO:0000303" key="19">
    <source>
    </source>
</evidence>
<evidence type="ECO:0000303" key="20">
    <source>
    </source>
</evidence>
<evidence type="ECO:0000303" key="21">
    <source>
    </source>
</evidence>
<evidence type="ECO:0000303" key="22">
    <source>
    </source>
</evidence>
<evidence type="ECO:0000305" key="23"/>
<evidence type="ECO:0000312" key="24">
    <source>
        <dbReference type="HGNC" id="HGNC:11125"/>
    </source>
</evidence>
<evidence type="ECO:0007744" key="25">
    <source>
    </source>
</evidence>
<evidence type="ECO:0007744" key="26">
    <source>
    </source>
</evidence>
<evidence type="ECO:0007744" key="27">
    <source>
    </source>
</evidence>
<evidence type="ECO:0007744" key="28">
    <source>
    </source>
</evidence>
<evidence type="ECO:0007744" key="29">
    <source>
    </source>
</evidence>
<evidence type="ECO:0007744" key="30">
    <source>
    </source>
</evidence>
<evidence type="ECO:0007829" key="31">
    <source>
        <dbReference type="PDB" id="1WM3"/>
    </source>
</evidence>
<evidence type="ECO:0007829" key="32">
    <source>
        <dbReference type="PDB" id="2AWT"/>
    </source>
</evidence>
<evidence type="ECO:0007829" key="33">
    <source>
        <dbReference type="PDB" id="2CKH"/>
    </source>
</evidence>
<evidence type="ECO:0007829" key="34">
    <source>
        <dbReference type="PDB" id="2N1W"/>
    </source>
</evidence>
<evidence type="ECO:0007829" key="35">
    <source>
        <dbReference type="PDB" id="2RPQ"/>
    </source>
</evidence>
<evidence type="ECO:0007829" key="36">
    <source>
        <dbReference type="PDB" id="6JXX"/>
    </source>
</evidence>
<sequence>MADEKPKEGVKTENNDHINLKVAGQDGSVVQFKIKRHTPLSKLMKAYCERQGLSMRQIRFRFDGQPINETDTPAQLEMEDEDTIDVFQQQTGGVY</sequence>
<name>SUMO2_HUMAN</name>
<organism>
    <name type="scientific">Homo sapiens</name>
    <name type="common">Human</name>
    <dbReference type="NCBI Taxonomy" id="9606"/>
    <lineage>
        <taxon>Eukaryota</taxon>
        <taxon>Metazoa</taxon>
        <taxon>Chordata</taxon>
        <taxon>Craniata</taxon>
        <taxon>Vertebrata</taxon>
        <taxon>Euteleostomi</taxon>
        <taxon>Mammalia</taxon>
        <taxon>Eutheria</taxon>
        <taxon>Euarchontoglires</taxon>
        <taxon>Primates</taxon>
        <taxon>Haplorrhini</taxon>
        <taxon>Catarrhini</taxon>
        <taxon>Hominidae</taxon>
        <taxon>Homo</taxon>
    </lineage>
</organism>
<keyword id="KW-0002">3D-structure</keyword>
<keyword id="KW-0007">Acetylation</keyword>
<keyword id="KW-0025">Alternative splicing</keyword>
<keyword id="KW-0945">Host-virus interaction</keyword>
<keyword id="KW-1017">Isopeptide bond</keyword>
<keyword id="KW-0539">Nucleus</keyword>
<keyword id="KW-1267">Proteomics identification</keyword>
<keyword id="KW-1185">Reference proteome</keyword>
<keyword id="KW-0832">Ubl conjugation</keyword>
<keyword id="KW-0833">Ubl conjugation pathway</keyword>
<comment type="function">
    <text evidence="9 10 11 15 16 18">Ubiquitin-like protein that can be covalently attached to proteins as a monomer or as a lysine-linked polymer. Covalent attachment via an isopeptide bond to its substrates requires prior activation by the E1 complex SAE1-SAE2 and linkage to the E2 enzyme UBE2I, and can be promoted by an E3 ligase such as PIAS1-4, RANBP2, CBX4 or ZNF451 (PubMed:26524494). This post-translational modification on lysine residues of proteins plays a crucial role in a number of cellular processes such as nuclear transport, DNA replication and repair, mitosis and signal transduction. Polymeric SUMO2 chains are also susceptible to polyubiquitination which functions as a signal for proteasomal degradation of modified proteins (PubMed:18408734, PubMed:18538659, PubMed:21965678, PubMed:9556629). Plays a role in the regulation of sumoylation status of SETX (PubMed:24105744).</text>
</comment>
<comment type="subunit">
    <text evidence="1 4 5 8 10 11 13 16 17 23">Interacts with SAE2 and UBE2I. Interacts with ZNF451. Identified in a complex with ZNF451 and UBE2I/UBC9, where one ZNF451 interacts with one UBE2I/UBC9 and two SUMO2 chains, one bound to the UBE2I/UBC9 active site and the other to another region of the same UBE2I/UBC9 molecule. Covalently attached to a number of proteins. Interacts with PELP1. Interacts with USP25; the interaction sumoylates USP25. Interacts with SIMC1, CASP8AP2, RNF111 and SOBP (via SIM domains). Interacts with MTA1 (PubMed:21965678). Interacts with HINT1 (By similarity). Interacts with GCNA (via SIM domains); this interaction allows the GCNA recruitment to DPCs sites (PubMed:30914427).</text>
</comment>
<comment type="subunit">
    <text evidence="12">(Microbial infection) Interacts with Epstein-barr virus BGLF4.</text>
</comment>
<comment type="interaction">
    <interactant intactId="EBI-473220">
        <id>P61956</id>
    </interactant>
    <interactant intactId="EBI-349905">
        <id>P38398</id>
        <label>BRCA1</label>
    </interactant>
    <organismsDiffer>false</organismsDiffer>
    <experiments>2</experiments>
</comment>
<comment type="interaction">
    <interactant intactId="EBI-473220">
        <id>P61956</id>
    </interactant>
    <interactant intactId="EBI-523590">
        <id>Q12873</id>
        <label>CHD3</label>
    </interactant>
    <organismsDiffer>false</organismsDiffer>
    <experiments>3</experiments>
</comment>
<comment type="interaction">
    <interactant intactId="EBI-473220">
        <id>P61956</id>
    </interactant>
    <interactant intactId="EBI-10172004">
        <id>Q8IX15-3</id>
        <label>HOMEZ</label>
    </interactant>
    <organismsDiffer>false</organismsDiffer>
    <experiments>3</experiments>
</comment>
<comment type="interaction">
    <interactant intactId="EBI-473220">
        <id>P61956</id>
    </interactant>
    <interactant intactId="EBI-298355">
        <id>P10242</id>
        <label>MYB</label>
    </interactant>
    <organismsDiffer>false</organismsDiffer>
    <experiments>3</experiments>
</comment>
<comment type="interaction">
    <interactant intactId="EBI-473220">
        <id>P61956</id>
    </interactant>
    <interactant intactId="EBI-716449">
        <id>Q8IZL8</id>
        <label>PELP1</label>
    </interactant>
    <organismsDiffer>false</organismsDiffer>
    <experiments>4</experiments>
</comment>
<comment type="interaction">
    <interactant intactId="EBI-473220">
        <id>P61956</id>
    </interactant>
    <interactant intactId="EBI-473160">
        <id>Q8N2W9</id>
        <label>PIAS4</label>
    </interactant>
    <organismsDiffer>false</organismsDiffer>
    <experiments>3</experiments>
</comment>
<comment type="interaction">
    <interactant intactId="EBI-473220">
        <id>P61956</id>
    </interactant>
    <interactant intactId="EBI-2822935">
        <id>Q9P0U3</id>
        <label>SENP1</label>
    </interactant>
    <organismsDiffer>false</organismsDiffer>
    <experiments>6</experiments>
</comment>
<comment type="interaction">
    <interactant intactId="EBI-473220">
        <id>P61956</id>
    </interactant>
    <interactant intactId="EBI-714881">
        <id>Q9HC62</id>
        <label>SENP2</label>
    </interactant>
    <organismsDiffer>false</organismsDiffer>
    <experiments>5</experiments>
</comment>
<comment type="interaction">
    <interactant intactId="EBI-473220">
        <id>P61956</id>
    </interactant>
    <interactant intactId="EBI-6589365">
        <id>P23497-2</id>
        <label>SP100</label>
    </interactant>
    <organismsDiffer>false</organismsDiffer>
    <experiments>3</experiments>
</comment>
<comment type="interaction">
    <interactant intactId="EBI-473220">
        <id>P61956</id>
    </interactant>
    <interactant intactId="EBI-356349">
        <id>Q92844</id>
        <label>TANK</label>
    </interactant>
    <organismsDiffer>false</organismsDiffer>
    <experiments>3</experiments>
</comment>
<comment type="interaction">
    <interactant intactId="EBI-473220">
        <id>P61956</id>
    </interactant>
    <interactant intactId="EBI-348333">
        <id>Q13569</id>
        <label>TDG</label>
    </interactant>
    <organismsDiffer>false</organismsDiffer>
    <experiments>2</experiments>
</comment>
<comment type="interaction">
    <interactant intactId="EBI-473220">
        <id>P61956</id>
    </interactant>
    <interactant intactId="EBI-80168">
        <id>P63279</id>
        <label>UBE2I</label>
    </interactant>
    <organismsDiffer>false</organismsDiffer>
    <experiments>5</experiments>
</comment>
<comment type="interaction">
    <interactant intactId="EBI-473220">
        <id>P61956</id>
    </interactant>
    <interactant intactId="EBI-2513462">
        <id>Q9UHP3</id>
        <label>USP25</label>
    </interactant>
    <organismsDiffer>false</organismsDiffer>
    <experiments>6</experiments>
</comment>
<comment type="interaction">
    <interactant intactId="EBI-473220">
        <id>P61956</id>
    </interactant>
    <interactant intactId="EBI-2513899">
        <id>Q5W0Q7</id>
        <label>USPL1</label>
    </interactant>
    <organismsDiffer>false</organismsDiffer>
    <experiments>2</experiments>
</comment>
<comment type="interaction">
    <interactant intactId="EBI-473220">
        <id>P61956</id>
    </interactant>
    <interactant intactId="EBI-2515625">
        <id>Q86T24</id>
        <label>ZBTB33</label>
    </interactant>
    <organismsDiffer>false</organismsDiffer>
    <experiments>3</experiments>
</comment>
<comment type="interaction">
    <interactant intactId="EBI-473220">
        <id>P61956</id>
    </interactant>
    <interactant intactId="EBI-9995672">
        <id>O15060</id>
        <label>ZBTB39</label>
    </interactant>
    <organismsDiffer>false</organismsDiffer>
    <experiments>3</experiments>
</comment>
<comment type="interaction">
    <interactant intactId="EBI-473220">
        <id>P61956</id>
    </interactant>
    <interactant intactId="EBI-743906">
        <id>Q96IT1</id>
        <label>ZNF496</label>
    </interactant>
    <organismsDiffer>false</organismsDiffer>
    <experiments>3</experiments>
</comment>
<comment type="interaction">
    <interactant intactId="EBI-473220">
        <id>P61956</id>
    </interactant>
    <interactant intactId="EBI-7258907">
        <id>O88846</id>
        <label>Rnf4</label>
    </interactant>
    <organismsDiffer>true</organismsDiffer>
    <experiments>2</experiments>
</comment>
<comment type="interaction">
    <interactant intactId="EBI-473220">
        <id>P61956</id>
    </interactant>
    <interactant intactId="EBI-8018150">
        <id>Q6DRC5</id>
        <label>uspl1</label>
    </interactant>
    <organismsDiffer>true</organismsDiffer>
    <experiments>2</experiments>
</comment>
<comment type="subcellular location">
    <subcellularLocation>
        <location>Nucleus</location>
    </subcellularLocation>
    <subcellularLocation>
        <location>Nucleus</location>
        <location>PML body</location>
    </subcellularLocation>
</comment>
<comment type="alternative products">
    <event type="alternative splicing"/>
    <isoform>
        <id>P61956-1</id>
        <name>1</name>
        <sequence type="displayed"/>
    </isoform>
    <isoform>
        <id>P61956-2</id>
        <name>2</name>
        <sequence type="described" ref="VSP_042351"/>
    </isoform>
</comment>
<comment type="tissue specificity">
    <text evidence="18">Broadly expressed.</text>
</comment>
<comment type="PTM">
    <text evidence="9 14">Polymeric chains can be formed through Lys-11 cross-linking. Polymeric SUMO2 chains undergo 'Lys-6'-, 'Lys-11'-, 'Lys-48'- and 'Lys-63'-linked polyubiquitination by RNF4.</text>
</comment>
<comment type="PTM">
    <text evidence="6">Cleavage of precursor form by SENP1 or SENP2 is necessary for function.</text>
</comment>
<comment type="PTM">
    <text evidence="9 14">Monoubiquitinated N-terminally by UBE2W, which primes it for RNF4-dependent polyubiquitination by the UBE2V1-UBE2N heterodimer.</text>
</comment>
<comment type="similarity">
    <text evidence="23">Belongs to the ubiquitin family. SUMO subfamily.</text>
</comment>
<comment type="online information" name="Wikipedia">
    <link uri="https://en.wikipedia.org/wiki/SUMO_protein"/>
    <text>SUMO protein entry</text>
</comment>
<accession>P61956</accession>
<accession>B2R4I2</accession>
<accession>P55855</accession>
<accession>Q32Q42</accession>
<accession>Q6IPZ6</accession>
<accession>Q96HK1</accession>
<gene>
    <name evidence="24" type="primary">SUMO2</name>
    <name evidence="19 24" type="synonym">SMT3B</name>
    <name type="synonym">SMT3H2</name>
</gene>
<dbReference type="EMBL" id="L76416">
    <property type="protein sequence ID" value="AAD45399.1"/>
    <property type="molecule type" value="mRNA"/>
</dbReference>
<dbReference type="EMBL" id="X99585">
    <property type="protein sequence ID" value="CAA67897.1"/>
    <property type="molecule type" value="mRNA"/>
</dbReference>
<dbReference type="EMBL" id="AK311837">
    <property type="protein sequence ID" value="BAG34779.1"/>
    <property type="molecule type" value="mRNA"/>
</dbReference>
<dbReference type="EMBL" id="AC022211">
    <property type="status" value="NOT_ANNOTATED_CDS"/>
    <property type="molecule type" value="Genomic_DNA"/>
</dbReference>
<dbReference type="EMBL" id="CH471099">
    <property type="protein sequence ID" value="EAW89249.1"/>
    <property type="molecule type" value="Genomic_DNA"/>
</dbReference>
<dbReference type="EMBL" id="BC008450">
    <property type="protein sequence ID" value="AAH08450.1"/>
    <property type="molecule type" value="mRNA"/>
</dbReference>
<dbReference type="EMBL" id="BC016775">
    <property type="protein sequence ID" value="AAH16775.1"/>
    <property type="molecule type" value="mRNA"/>
</dbReference>
<dbReference type="EMBL" id="BC022340">
    <property type="protein sequence ID" value="AAH22340.1"/>
    <property type="molecule type" value="mRNA"/>
</dbReference>
<dbReference type="EMBL" id="BC062713">
    <property type="protein sequence ID" value="AAH62713.1"/>
    <property type="molecule type" value="mRNA"/>
</dbReference>
<dbReference type="EMBL" id="BC068465">
    <property type="protein sequence ID" value="AAH68465.1"/>
    <property type="molecule type" value="mRNA"/>
</dbReference>
<dbReference type="EMBL" id="BC070159">
    <property type="protein sequence ID" value="AAH70159.1"/>
    <property type="molecule type" value="mRNA"/>
</dbReference>
<dbReference type="EMBL" id="BC071645">
    <property type="protein sequence ID" value="AAH71645.1"/>
    <property type="molecule type" value="mRNA"/>
</dbReference>
<dbReference type="EMBL" id="BC071646">
    <property type="protein sequence ID" value="AAH71646.1"/>
    <property type="molecule type" value="mRNA"/>
</dbReference>
<dbReference type="EMBL" id="BC107853">
    <property type="protein sequence ID" value="AAI07854.1"/>
    <property type="molecule type" value="mRNA"/>
</dbReference>
<dbReference type="EMBL" id="BF978876">
    <property type="status" value="NOT_ANNOTATED_CDS"/>
    <property type="molecule type" value="mRNA"/>
</dbReference>
<dbReference type="CCDS" id="CCDS45773.1">
    <molecule id="P61956-2"/>
</dbReference>
<dbReference type="CCDS" id="CCDS45774.1">
    <molecule id="P61956-1"/>
</dbReference>
<dbReference type="PIR" id="JC4760">
    <property type="entry name" value="JC4760"/>
</dbReference>
<dbReference type="RefSeq" id="NP_001005849.1">
    <molecule id="P61956-2"/>
    <property type="nucleotide sequence ID" value="NM_001005849.2"/>
</dbReference>
<dbReference type="RefSeq" id="NP_008868.3">
    <molecule id="P61956-1"/>
    <property type="nucleotide sequence ID" value="NM_006937.3"/>
</dbReference>
<dbReference type="PDB" id="1WM2">
    <property type="method" value="X-ray"/>
    <property type="resolution" value="1.60 A"/>
    <property type="chains" value="A=12-89"/>
</dbReference>
<dbReference type="PDB" id="1WM3">
    <property type="method" value="X-ray"/>
    <property type="resolution" value="1.20 A"/>
    <property type="chains" value="A=17-88"/>
</dbReference>
<dbReference type="PDB" id="1WZ0">
    <property type="method" value="NMR"/>
    <property type="chains" value="A=1-91"/>
</dbReference>
<dbReference type="PDB" id="2AWT">
    <property type="method" value="NMR"/>
    <property type="chains" value="A=1-95"/>
</dbReference>
<dbReference type="PDB" id="2CKH">
    <property type="method" value="X-ray"/>
    <property type="resolution" value="3.20 A"/>
    <property type="chains" value="B=15-93"/>
</dbReference>
<dbReference type="PDB" id="2D07">
    <property type="method" value="X-ray"/>
    <property type="resolution" value="2.10 A"/>
    <property type="chains" value="B=1-93"/>
</dbReference>
<dbReference type="PDB" id="2IO0">
    <property type="method" value="X-ray"/>
    <property type="resolution" value="2.30 A"/>
    <property type="chains" value="B=15-95"/>
</dbReference>
<dbReference type="PDB" id="2IO3">
    <property type="method" value="X-ray"/>
    <property type="resolution" value="3.20 A"/>
    <property type="chains" value="B=15-93"/>
</dbReference>
<dbReference type="PDB" id="2IYD">
    <property type="method" value="X-ray"/>
    <property type="resolution" value="3.20 A"/>
    <property type="chains" value="B=15-95"/>
</dbReference>
<dbReference type="PDB" id="2N1W">
    <property type="method" value="NMR"/>
    <property type="chains" value="A=1-93"/>
</dbReference>
<dbReference type="PDB" id="2N9E">
    <property type="method" value="NMR"/>
    <property type="chains" value="B=1-95"/>
</dbReference>
<dbReference type="PDB" id="2RPQ">
    <property type="method" value="NMR"/>
    <property type="chains" value="A=1-93"/>
</dbReference>
<dbReference type="PDB" id="3UIN">
    <property type="method" value="X-ray"/>
    <property type="resolution" value="2.60 A"/>
    <property type="chains" value="B=14-93"/>
</dbReference>
<dbReference type="PDB" id="3UIO">
    <property type="method" value="X-ray"/>
    <property type="resolution" value="2.60 A"/>
    <property type="chains" value="B=14-93"/>
</dbReference>
<dbReference type="PDB" id="3ZO5">
    <property type="method" value="X-ray"/>
    <property type="resolution" value="2.15 A"/>
    <property type="chains" value="B=16-95"/>
</dbReference>
<dbReference type="PDB" id="4BKG">
    <property type="method" value="X-ray"/>
    <property type="resolution" value="2.11 A"/>
    <property type="chains" value="A=12-93"/>
</dbReference>
<dbReference type="PDB" id="4NPN">
    <property type="method" value="X-ray"/>
    <property type="resolution" value="1.63 A"/>
    <property type="chains" value="A=12-93"/>
</dbReference>
<dbReference type="PDB" id="5D2M">
    <property type="method" value="X-ray"/>
    <property type="resolution" value="2.40 A"/>
    <property type="chains" value="B/E=15-93"/>
</dbReference>
<dbReference type="PDB" id="5ELU">
    <property type="method" value="X-ray"/>
    <property type="resolution" value="2.35 A"/>
    <property type="chains" value="B=14-89"/>
</dbReference>
<dbReference type="PDB" id="5EQL">
    <property type="method" value="X-ray"/>
    <property type="resolution" value="2.49 A"/>
    <property type="chains" value="B=14-89"/>
</dbReference>
<dbReference type="PDB" id="5GHB">
    <property type="method" value="NMR"/>
    <property type="chains" value="A=1-93"/>
</dbReference>
<dbReference type="PDB" id="5GHC">
    <property type="method" value="NMR"/>
    <property type="chains" value="A=1-93"/>
</dbReference>
<dbReference type="PDB" id="6JXW">
    <property type="method" value="NMR"/>
    <property type="chains" value="A=1-95"/>
</dbReference>
<dbReference type="PDB" id="6JXX">
    <property type="method" value="NMR"/>
    <property type="chains" value="A=1-95"/>
</dbReference>
<dbReference type="PDB" id="7ZJV">
    <property type="method" value="X-ray"/>
    <property type="resolution" value="2.40 A"/>
    <property type="chains" value="B=18-92"/>
</dbReference>
<dbReference type="PDBsum" id="1WM2"/>
<dbReference type="PDBsum" id="1WM3"/>
<dbReference type="PDBsum" id="1WZ0"/>
<dbReference type="PDBsum" id="2AWT"/>
<dbReference type="PDBsum" id="2CKH"/>
<dbReference type="PDBsum" id="2D07"/>
<dbReference type="PDBsum" id="2IO0"/>
<dbReference type="PDBsum" id="2IO3"/>
<dbReference type="PDBsum" id="2IYD"/>
<dbReference type="PDBsum" id="2N1W"/>
<dbReference type="PDBsum" id="2N9E"/>
<dbReference type="PDBsum" id="2RPQ"/>
<dbReference type="PDBsum" id="3UIN"/>
<dbReference type="PDBsum" id="3UIO"/>
<dbReference type="PDBsum" id="3ZO5"/>
<dbReference type="PDBsum" id="4BKG"/>
<dbReference type="PDBsum" id="4NPN"/>
<dbReference type="PDBsum" id="5D2M"/>
<dbReference type="PDBsum" id="5ELU"/>
<dbReference type="PDBsum" id="5EQL"/>
<dbReference type="PDBsum" id="5GHB"/>
<dbReference type="PDBsum" id="5GHC"/>
<dbReference type="PDBsum" id="6JXW"/>
<dbReference type="PDBsum" id="6JXX"/>
<dbReference type="PDBsum" id="7ZJV"/>
<dbReference type="BMRB" id="P61956"/>
<dbReference type="SMR" id="P61956"/>
<dbReference type="BioGRID" id="112497">
    <property type="interactions" value="613"/>
</dbReference>
<dbReference type="DIP" id="DIP-29253N"/>
<dbReference type="ELM" id="P61956"/>
<dbReference type="FunCoup" id="P61956">
    <property type="interactions" value="3816"/>
</dbReference>
<dbReference type="IntAct" id="P61956">
    <property type="interactions" value="110"/>
</dbReference>
<dbReference type="MINT" id="P61956"/>
<dbReference type="STRING" id="9606.ENSP00000405965"/>
<dbReference type="BindingDB" id="P61956"/>
<dbReference type="ChEMBL" id="CHEMBL2146301"/>
<dbReference type="GlyGen" id="P61956">
    <property type="glycosylation" value="1 site, 1 O-linked glycan (1 site)"/>
</dbReference>
<dbReference type="iPTMnet" id="P61956"/>
<dbReference type="PhosphoSitePlus" id="P61956"/>
<dbReference type="SwissPalm" id="P61956"/>
<dbReference type="BioMuta" id="SUMO2"/>
<dbReference type="DMDM" id="378405233"/>
<dbReference type="jPOST" id="P61956"/>
<dbReference type="MassIVE" id="P61956"/>
<dbReference type="PaxDb" id="9606-ENSP00000405965"/>
<dbReference type="PeptideAtlas" id="P61956"/>
<dbReference type="ProteomicsDB" id="57342">
    <molecule id="P61956-1"/>
</dbReference>
<dbReference type="ProteomicsDB" id="57343">
    <molecule id="P61956-2"/>
</dbReference>
<dbReference type="Pumba" id="P61956"/>
<dbReference type="TopDownProteomics" id="P61956-1">
    <molecule id="P61956-1"/>
</dbReference>
<dbReference type="TopDownProteomics" id="P61956-2">
    <molecule id="P61956-2"/>
</dbReference>
<dbReference type="Antibodypedia" id="32111">
    <property type="antibodies" value="1052 antibodies from 41 providers"/>
</dbReference>
<dbReference type="DNASU" id="6613"/>
<dbReference type="Ensembl" id="ENST00000314523.7">
    <molecule id="P61956-2"/>
    <property type="protein sequence ID" value="ENSP00000400886.2"/>
    <property type="gene ID" value="ENSG00000188612.12"/>
</dbReference>
<dbReference type="Ensembl" id="ENST00000420826.7">
    <molecule id="P61956-1"/>
    <property type="protein sequence ID" value="ENSP00000405965.2"/>
    <property type="gene ID" value="ENSG00000188612.12"/>
</dbReference>
<dbReference type="GeneID" id="6613"/>
<dbReference type="KEGG" id="hsa:6613"/>
<dbReference type="MANE-Select" id="ENST00000420826.7">
    <property type="protein sequence ID" value="ENSP00000405965.2"/>
    <property type="RefSeq nucleotide sequence ID" value="NM_006937.4"/>
    <property type="RefSeq protein sequence ID" value="NP_008868.3"/>
</dbReference>
<dbReference type="UCSC" id="uc002jne.4">
    <molecule id="P61956-1"/>
    <property type="organism name" value="human"/>
</dbReference>
<dbReference type="AGR" id="HGNC:11125"/>
<dbReference type="CTD" id="6613"/>
<dbReference type="DisGeNET" id="6613"/>
<dbReference type="GeneCards" id="SUMO2"/>
<dbReference type="HGNC" id="HGNC:11125">
    <property type="gene designation" value="SUMO2"/>
</dbReference>
<dbReference type="HPA" id="ENSG00000188612">
    <property type="expression patterns" value="Low tissue specificity"/>
</dbReference>
<dbReference type="MIM" id="603042">
    <property type="type" value="gene"/>
</dbReference>
<dbReference type="neXtProt" id="NX_P61956"/>
<dbReference type="OpenTargets" id="ENSG00000188612"/>
<dbReference type="PharmGKB" id="PA134914683"/>
<dbReference type="VEuPathDB" id="HostDB:ENSG00000188612"/>
<dbReference type="eggNOG" id="KOG1769">
    <property type="taxonomic scope" value="Eukaryota"/>
</dbReference>
<dbReference type="GeneTree" id="ENSGT00950000182895"/>
<dbReference type="HOGENOM" id="CLU_148322_2_1_1"/>
<dbReference type="InParanoid" id="P61956"/>
<dbReference type="OMA" id="MKIYCAR"/>
<dbReference type="OrthoDB" id="9925208at2759"/>
<dbReference type="PAN-GO" id="P61956">
    <property type="GO annotations" value="4 GO annotations based on evolutionary models"/>
</dbReference>
<dbReference type="PhylomeDB" id="P61956"/>
<dbReference type="TreeFam" id="TF315116"/>
<dbReference type="PathwayCommons" id="P61956"/>
<dbReference type="Reactome" id="R-HSA-196791">
    <property type="pathway name" value="Vitamin D (calciferol) metabolism"/>
</dbReference>
<dbReference type="Reactome" id="R-HSA-3065676">
    <property type="pathway name" value="SUMO is conjugated to E1 (UBA2:SAE1)"/>
</dbReference>
<dbReference type="Reactome" id="R-HSA-3065678">
    <property type="pathway name" value="SUMO is transferred from E1 to E2 (UBE2I, UBC9)"/>
</dbReference>
<dbReference type="Reactome" id="R-HSA-3065679">
    <property type="pathway name" value="SUMO is proteolytically processed"/>
</dbReference>
<dbReference type="Reactome" id="R-HSA-3108214">
    <property type="pathway name" value="SUMOylation of DNA damage response and repair proteins"/>
</dbReference>
<dbReference type="Reactome" id="R-HSA-3232118">
    <property type="pathway name" value="SUMOylation of transcription factors"/>
</dbReference>
<dbReference type="Reactome" id="R-HSA-3899300">
    <property type="pathway name" value="SUMOylation of transcription cofactors"/>
</dbReference>
<dbReference type="Reactome" id="R-HSA-4085377">
    <property type="pathway name" value="SUMOylation of SUMOylation proteins"/>
</dbReference>
<dbReference type="Reactome" id="R-HSA-4090294">
    <property type="pathway name" value="SUMOylation of intracellular receptors"/>
</dbReference>
<dbReference type="Reactome" id="R-HSA-4551638">
    <property type="pathway name" value="SUMOylation of chromatin organization proteins"/>
</dbReference>
<dbReference type="Reactome" id="R-HSA-4570464">
    <property type="pathway name" value="SUMOylation of RNA binding proteins"/>
</dbReference>
<dbReference type="Reactome" id="R-HSA-4615885">
    <property type="pathway name" value="SUMOylation of DNA replication proteins"/>
</dbReference>
<dbReference type="Reactome" id="R-HSA-5693607">
    <property type="pathway name" value="Processing of DNA double-strand break ends"/>
</dbReference>
<dbReference type="Reactome" id="R-HSA-5696395">
    <property type="pathway name" value="Formation of Incision Complex in GG-NER"/>
</dbReference>
<dbReference type="Reactome" id="R-HSA-9843940">
    <property type="pathway name" value="Regulation of endogenous retroelements by KRAB-ZFP proteins"/>
</dbReference>
<dbReference type="SignaLink" id="P61956"/>
<dbReference type="SIGNOR" id="P61956"/>
<dbReference type="BioGRID-ORCS" id="6613">
    <property type="hits" value="475 hits in 1098 CRISPR screens"/>
</dbReference>
<dbReference type="CD-CODE" id="B5B9A610">
    <property type="entry name" value="PML body"/>
</dbReference>
<dbReference type="ChiTaRS" id="SUMO2">
    <property type="organism name" value="human"/>
</dbReference>
<dbReference type="EvolutionaryTrace" id="P61956"/>
<dbReference type="GeneWiki" id="SUMO2"/>
<dbReference type="GenomeRNAi" id="6613"/>
<dbReference type="Pharos" id="P61956">
    <property type="development level" value="Tbio"/>
</dbReference>
<dbReference type="PRO" id="PR:P61956"/>
<dbReference type="Proteomes" id="UP000005640">
    <property type="component" value="Chromosome 17"/>
</dbReference>
<dbReference type="RNAct" id="P61956">
    <property type="molecule type" value="protein"/>
</dbReference>
<dbReference type="Bgee" id="ENSG00000188612">
    <property type="expression patterns" value="Expressed in ganglionic eminence and 210 other cell types or tissues"/>
</dbReference>
<dbReference type="ExpressionAtlas" id="P61956">
    <property type="expression patterns" value="baseline and differential"/>
</dbReference>
<dbReference type="GO" id="GO:0098982">
    <property type="term" value="C:GABA-ergic synapse"/>
    <property type="evidence" value="ECO:0007669"/>
    <property type="project" value="Ensembl"/>
</dbReference>
<dbReference type="GO" id="GO:0098978">
    <property type="term" value="C:glutamatergic synapse"/>
    <property type="evidence" value="ECO:0007669"/>
    <property type="project" value="Ensembl"/>
</dbReference>
<dbReference type="GO" id="GO:0098686">
    <property type="term" value="C:hippocampal mossy fiber to CA3 synapse"/>
    <property type="evidence" value="ECO:0007669"/>
    <property type="project" value="Ensembl"/>
</dbReference>
<dbReference type="GO" id="GO:0005654">
    <property type="term" value="C:nucleoplasm"/>
    <property type="evidence" value="ECO:0000304"/>
    <property type="project" value="Reactome"/>
</dbReference>
<dbReference type="GO" id="GO:0005634">
    <property type="term" value="C:nucleus"/>
    <property type="evidence" value="ECO:0000314"/>
    <property type="project" value="UniProtKB"/>
</dbReference>
<dbReference type="GO" id="GO:0016605">
    <property type="term" value="C:PML body"/>
    <property type="evidence" value="ECO:0000314"/>
    <property type="project" value="UniProtKB"/>
</dbReference>
<dbReference type="GO" id="GO:0099524">
    <property type="term" value="C:postsynaptic cytosol"/>
    <property type="evidence" value="ECO:0007669"/>
    <property type="project" value="Ensembl"/>
</dbReference>
<dbReference type="GO" id="GO:0099523">
    <property type="term" value="C:presynaptic cytosol"/>
    <property type="evidence" value="ECO:0007669"/>
    <property type="project" value="Ensembl"/>
</dbReference>
<dbReference type="GO" id="GO:0031386">
    <property type="term" value="F:protein tag activity"/>
    <property type="evidence" value="ECO:0000318"/>
    <property type="project" value="GO_Central"/>
</dbReference>
<dbReference type="GO" id="GO:0003723">
    <property type="term" value="F:RNA binding"/>
    <property type="evidence" value="ECO:0007005"/>
    <property type="project" value="UniProtKB"/>
</dbReference>
<dbReference type="GO" id="GO:0019789">
    <property type="term" value="F:SUMO transferase activity"/>
    <property type="evidence" value="ECO:0007669"/>
    <property type="project" value="Ensembl"/>
</dbReference>
<dbReference type="GO" id="GO:0031625">
    <property type="term" value="F:ubiquitin protein ligase binding"/>
    <property type="evidence" value="ECO:0000353"/>
    <property type="project" value="UniProtKB"/>
</dbReference>
<dbReference type="GO" id="GO:0044389">
    <property type="term" value="F:ubiquitin-like protein ligase binding"/>
    <property type="evidence" value="ECO:0000318"/>
    <property type="project" value="GO_Central"/>
</dbReference>
<dbReference type="GO" id="GO:0032436">
    <property type="term" value="P:positive regulation of proteasomal ubiquitin-dependent protein catabolic process"/>
    <property type="evidence" value="ECO:0000314"/>
    <property type="project" value="UniProtKB"/>
</dbReference>
<dbReference type="GO" id="GO:0045944">
    <property type="term" value="P:positive regulation of transcription by RNA polymerase II"/>
    <property type="evidence" value="ECO:0007669"/>
    <property type="project" value="Ensembl"/>
</dbReference>
<dbReference type="GO" id="GO:0016925">
    <property type="term" value="P:protein sumoylation"/>
    <property type="evidence" value="ECO:0000314"/>
    <property type="project" value="UniProtKB"/>
</dbReference>
<dbReference type="CDD" id="cd16115">
    <property type="entry name" value="Ubl_SUMO2_3_4"/>
    <property type="match status" value="1"/>
</dbReference>
<dbReference type="FunFam" id="3.10.20.90:FF:000482">
    <property type="entry name" value="Small ubiquitin-related modifier 2"/>
    <property type="match status" value="1"/>
</dbReference>
<dbReference type="Gene3D" id="3.10.20.90">
    <property type="entry name" value="Phosphatidylinositol 3-kinase Catalytic Subunit, Chain A, domain 1"/>
    <property type="match status" value="1"/>
</dbReference>
<dbReference type="IDEAL" id="IID00376"/>
<dbReference type="InterPro" id="IPR022617">
    <property type="entry name" value="Rad60/SUMO-like_dom"/>
</dbReference>
<dbReference type="InterPro" id="IPR000626">
    <property type="entry name" value="Ubiquitin-like_dom"/>
</dbReference>
<dbReference type="InterPro" id="IPR029071">
    <property type="entry name" value="Ubiquitin-like_domsf"/>
</dbReference>
<dbReference type="PANTHER" id="PTHR10562">
    <property type="entry name" value="SMALL UBIQUITIN-RELATED MODIFIER"/>
    <property type="match status" value="1"/>
</dbReference>
<dbReference type="Pfam" id="PF11976">
    <property type="entry name" value="Rad60-SLD"/>
    <property type="match status" value="1"/>
</dbReference>
<dbReference type="SMART" id="SM00213">
    <property type="entry name" value="UBQ"/>
    <property type="match status" value="1"/>
</dbReference>
<dbReference type="SUPFAM" id="SSF54236">
    <property type="entry name" value="Ubiquitin-like"/>
    <property type="match status" value="1"/>
</dbReference>
<dbReference type="PROSITE" id="PS50053">
    <property type="entry name" value="UBIQUITIN_2"/>
    <property type="match status" value="1"/>
</dbReference>